<feature type="chain" id="PRO_0000347918" description="Sensor protein kinase GraS">
    <location>
        <begin position="1"/>
        <end position="346"/>
    </location>
</feature>
<feature type="transmembrane region" description="Helical" evidence="2">
    <location>
        <begin position="15"/>
        <end position="35"/>
    </location>
</feature>
<feature type="transmembrane region" description="Helical" evidence="2">
    <location>
        <begin position="43"/>
        <end position="63"/>
    </location>
</feature>
<feature type="domain" description="Histidine kinase" evidence="3">
    <location>
        <begin position="126"/>
        <end position="332"/>
    </location>
</feature>
<organism>
    <name type="scientific">Staphylococcus aureus (strain MSSA476)</name>
    <dbReference type="NCBI Taxonomy" id="282459"/>
    <lineage>
        <taxon>Bacteria</taxon>
        <taxon>Bacillati</taxon>
        <taxon>Bacillota</taxon>
        <taxon>Bacilli</taxon>
        <taxon>Bacillales</taxon>
        <taxon>Staphylococcaceae</taxon>
        <taxon>Staphylococcus</taxon>
    </lineage>
</organism>
<reference key="1">
    <citation type="journal article" date="2004" name="Proc. Natl. Acad. Sci. U.S.A.">
        <title>Complete genomes of two clinical Staphylococcus aureus strains: evidence for the rapid evolution of virulence and drug resistance.</title>
        <authorList>
            <person name="Holden M.T.G."/>
            <person name="Feil E.J."/>
            <person name="Lindsay J.A."/>
            <person name="Peacock S.J."/>
            <person name="Day N.P.J."/>
            <person name="Enright M.C."/>
            <person name="Foster T.J."/>
            <person name="Moore C.E."/>
            <person name="Hurst L."/>
            <person name="Atkin R."/>
            <person name="Barron A."/>
            <person name="Bason N."/>
            <person name="Bentley S.D."/>
            <person name="Chillingworth C."/>
            <person name="Chillingworth T."/>
            <person name="Churcher C."/>
            <person name="Clark L."/>
            <person name="Corton C."/>
            <person name="Cronin A."/>
            <person name="Doggett J."/>
            <person name="Dowd L."/>
            <person name="Feltwell T."/>
            <person name="Hance Z."/>
            <person name="Harris B."/>
            <person name="Hauser H."/>
            <person name="Holroyd S."/>
            <person name="Jagels K."/>
            <person name="James K.D."/>
            <person name="Lennard N."/>
            <person name="Line A."/>
            <person name="Mayes R."/>
            <person name="Moule S."/>
            <person name="Mungall K."/>
            <person name="Ormond D."/>
            <person name="Quail M.A."/>
            <person name="Rabbinowitsch E."/>
            <person name="Rutherford K.M."/>
            <person name="Sanders M."/>
            <person name="Sharp S."/>
            <person name="Simmonds M."/>
            <person name="Stevens K."/>
            <person name="Whitehead S."/>
            <person name="Barrell B.G."/>
            <person name="Spratt B.G."/>
            <person name="Parkhill J."/>
        </authorList>
    </citation>
    <scope>NUCLEOTIDE SEQUENCE [LARGE SCALE GENOMIC DNA]</scope>
    <source>
        <strain>MSSA476</strain>
    </source>
</reference>
<comment type="function">
    <text evidence="1">Member of the two-component regulatory system GraR/GraS involved in resistance against cationic antimicrobial peptides (CAMPs). Functions as a sensor protein kinase which phosphorylates GraR through the auxiliary protein GraX. In turn, GraR up-regulates many genes such as adhesins, exoproteins, transporters, toxins, and proteins involved in cell wall synthesis. Down-regulates the expression of many genes involved in RNA and amino acid synthesis or glycolysis.</text>
</comment>
<comment type="catalytic activity">
    <reaction>
        <text>ATP + protein L-histidine = ADP + protein N-phospho-L-histidine.</text>
        <dbReference type="EC" id="2.7.13.3"/>
    </reaction>
</comment>
<comment type="subunit">
    <text evidence="1">Interacts with GraX.</text>
</comment>
<comment type="subcellular location">
    <subcellularLocation>
        <location evidence="4">Cell membrane</location>
        <topology evidence="4">Multi-pass membrane protein</topology>
    </subcellularLocation>
</comment>
<protein>
    <recommendedName>
        <fullName>Sensor protein kinase GraS</fullName>
        <ecNumber>2.7.13.3</ecNumber>
    </recommendedName>
    <alternativeName>
        <fullName>Glycopeptide resistance-associated protein S</fullName>
    </alternativeName>
</protein>
<gene>
    <name type="primary">graS</name>
    <name type="ordered locus">SAS0625</name>
</gene>
<proteinExistence type="inferred from homology"/>
<accession>Q6GBH0</accession>
<sequence>MNNLKWVAYFLKSRMNWIFWILFLNLLMLGISLIDYDFPIDSLFYIVSLNLSLTMIFLILTYFKEVKLYKHFDKDKEIEEIKHKDLAETPFQRHTVDYLYRQISAHKEKVVEQQLQLNMHEQTITEFVHDIKTPVTAMKLLIDQEKNQERKQALLYEWSRINSMLDTQLYITRLESQRKDMYFDYVSLKRMVIDEIQLTRHISQVKGIGFDVDFKVDDYVYTDIKWCRMIIRQILSNALKYSENFNIEIGTELNDQHVSLYIKDYGRGISKKDMPRIFERGFTSTANRNETTSSGMGLYLVNSVKDQLGIHLQVTSTVGKGTTVRLIFPLQNEIVERMSEVTNLSF</sequence>
<dbReference type="EC" id="2.7.13.3"/>
<dbReference type="EMBL" id="BX571857">
    <property type="protein sequence ID" value="CAG42401.1"/>
    <property type="molecule type" value="Genomic_DNA"/>
</dbReference>
<dbReference type="RefSeq" id="WP_001061262.1">
    <property type="nucleotide sequence ID" value="NC_002953.3"/>
</dbReference>
<dbReference type="SMR" id="Q6GBH0"/>
<dbReference type="KEGG" id="sas:SAS0625"/>
<dbReference type="HOGENOM" id="CLU_000445_13_1_9"/>
<dbReference type="GO" id="GO:0005886">
    <property type="term" value="C:plasma membrane"/>
    <property type="evidence" value="ECO:0007669"/>
    <property type="project" value="UniProtKB-SubCell"/>
</dbReference>
<dbReference type="GO" id="GO:0005524">
    <property type="term" value="F:ATP binding"/>
    <property type="evidence" value="ECO:0007669"/>
    <property type="project" value="UniProtKB-KW"/>
</dbReference>
<dbReference type="GO" id="GO:0004721">
    <property type="term" value="F:phosphoprotein phosphatase activity"/>
    <property type="evidence" value="ECO:0007669"/>
    <property type="project" value="TreeGrafter"/>
</dbReference>
<dbReference type="GO" id="GO:0000155">
    <property type="term" value="F:phosphorelay sensor kinase activity"/>
    <property type="evidence" value="ECO:0007669"/>
    <property type="project" value="InterPro"/>
</dbReference>
<dbReference type="GO" id="GO:0016036">
    <property type="term" value="P:cellular response to phosphate starvation"/>
    <property type="evidence" value="ECO:0007669"/>
    <property type="project" value="TreeGrafter"/>
</dbReference>
<dbReference type="GO" id="GO:0046677">
    <property type="term" value="P:response to antibiotic"/>
    <property type="evidence" value="ECO:0007669"/>
    <property type="project" value="UniProtKB-KW"/>
</dbReference>
<dbReference type="Gene3D" id="3.30.565.10">
    <property type="entry name" value="Histidine kinase-like ATPase, C-terminal domain"/>
    <property type="match status" value="1"/>
</dbReference>
<dbReference type="InterPro" id="IPR050351">
    <property type="entry name" value="2-comp_sensor_kinase"/>
</dbReference>
<dbReference type="InterPro" id="IPR036890">
    <property type="entry name" value="HATPase_C_sf"/>
</dbReference>
<dbReference type="InterPro" id="IPR005467">
    <property type="entry name" value="His_kinase_dom"/>
</dbReference>
<dbReference type="InterPro" id="IPR036097">
    <property type="entry name" value="HisK_dim/P_sf"/>
</dbReference>
<dbReference type="InterPro" id="IPR004358">
    <property type="entry name" value="Sig_transdc_His_kin-like_C"/>
</dbReference>
<dbReference type="PANTHER" id="PTHR45453:SF2">
    <property type="entry name" value="HISTIDINE KINASE"/>
    <property type="match status" value="1"/>
</dbReference>
<dbReference type="PANTHER" id="PTHR45453">
    <property type="entry name" value="PHOSPHATE REGULON SENSOR PROTEIN PHOR"/>
    <property type="match status" value="1"/>
</dbReference>
<dbReference type="Pfam" id="PF02518">
    <property type="entry name" value="HATPase_c"/>
    <property type="match status" value="1"/>
</dbReference>
<dbReference type="PRINTS" id="PR00344">
    <property type="entry name" value="BCTRLSENSOR"/>
</dbReference>
<dbReference type="SMART" id="SM00387">
    <property type="entry name" value="HATPase_c"/>
    <property type="match status" value="1"/>
</dbReference>
<dbReference type="SUPFAM" id="SSF55874">
    <property type="entry name" value="ATPase domain of HSP90 chaperone/DNA topoisomerase II/histidine kinase"/>
    <property type="match status" value="1"/>
</dbReference>
<dbReference type="SUPFAM" id="SSF47384">
    <property type="entry name" value="Homodimeric domain of signal transducing histidine kinase"/>
    <property type="match status" value="1"/>
</dbReference>
<dbReference type="PROSITE" id="PS50109">
    <property type="entry name" value="HIS_KIN"/>
    <property type="match status" value="1"/>
</dbReference>
<evidence type="ECO:0000250" key="1">
    <source>
        <dbReference type="UniProtKB" id="Q2G0D9"/>
    </source>
</evidence>
<evidence type="ECO:0000255" key="2"/>
<evidence type="ECO:0000255" key="3">
    <source>
        <dbReference type="PROSITE-ProRule" id="PRU00107"/>
    </source>
</evidence>
<evidence type="ECO:0000305" key="4"/>
<name>GRAS_STAAS</name>
<keyword id="KW-0046">Antibiotic resistance</keyword>
<keyword id="KW-0067">ATP-binding</keyword>
<keyword id="KW-1003">Cell membrane</keyword>
<keyword id="KW-0418">Kinase</keyword>
<keyword id="KW-0472">Membrane</keyword>
<keyword id="KW-0547">Nucleotide-binding</keyword>
<keyword id="KW-0808">Transferase</keyword>
<keyword id="KW-0812">Transmembrane</keyword>
<keyword id="KW-1133">Transmembrane helix</keyword>
<keyword id="KW-0902">Two-component regulatory system</keyword>
<keyword id="KW-0843">Virulence</keyword>